<sequence>MRKINLLDLETTNKIAAGEVIERPFSVVKELVENSIDAGAKNITIEIEDGGQKLIKIIDDGEGIYPIDIKNAFLPHATSKINSIEDIYKISTMGFRGEALASISSVSKTKLKSRVDSYNFGKEIYIEGGKIEYLKDTGCNVGTTIEVSDLFYNVPARLKFLKSARSDSSAISDIVNRFILAHPDISFNLINKGKQSIKSYGTGNLKDSIRCVYNKTISENLINFENHKDIISVYGFIGKPEISRKSRTNQSIFVNKRYVKSKFITAAVENAFKSFLTVNSYPFFVIFIDIFPEYIDVNVHPTKSEVKFKDERAMFKTIFDAVHEAIKGELKESFTNFFNKEDINIYDSEKSIAETIKPGKEEVQIPIDLNSNNKIDIFGNNINKLPNNTELLKNIDIKEKNILENNDNFYTSNQNEIYYTNKNDKCLNSCNKDDYSKIEKPLQKDNKNLDNLYLNEHNTNSSSINIKENKPNNFYVDMKIIGQFNNTYILIEKDKELYIIDQHAAHEKVLFEKFKSEIEKGYVVSQILLSPVVIELSEDEFNIYEENKDIFKNSGFSVEAFGECTINIKEVPLILGKPNVENLFMDILYNLKNMKSKETSTIKYNAIATLACKSAVKANDNLKEEEIKKLIEDMLILNNPYTCPHGRPTMIKFTLKDLEKKFKRIQ</sequence>
<reference key="1">
    <citation type="submission" date="2008-05" db="EMBL/GenBank/DDBJ databases">
        <title>Genome sequence of Clostridium botulinum Ba4 strain 657.</title>
        <authorList>
            <person name="Shrivastava S."/>
            <person name="Brown J.L."/>
            <person name="Bruce D."/>
            <person name="Detter C."/>
            <person name="Munk C."/>
            <person name="Smith L.A."/>
            <person name="Smith T.J."/>
            <person name="Sutton G."/>
            <person name="Brettin T.S."/>
        </authorList>
    </citation>
    <scope>NUCLEOTIDE SEQUENCE [LARGE SCALE GENOMIC DNA]</scope>
    <source>
        <strain>657 / Type Ba4</strain>
    </source>
</reference>
<accession>C3KX34</accession>
<proteinExistence type="inferred from homology"/>
<feature type="chain" id="PRO_1000203383" description="DNA mismatch repair protein MutL">
    <location>
        <begin position="1"/>
        <end position="666"/>
    </location>
</feature>
<comment type="function">
    <text evidence="1">This protein is involved in the repair of mismatches in DNA. It is required for dam-dependent methyl-directed DNA mismatch repair. May act as a 'molecular matchmaker', a protein that promotes the formation of a stable complex between two or more DNA-binding proteins in an ATP-dependent manner without itself being part of a final effector complex.</text>
</comment>
<comment type="similarity">
    <text evidence="1">Belongs to the DNA mismatch repair MutL/HexB family.</text>
</comment>
<organism>
    <name type="scientific">Clostridium botulinum (strain 657 / Type Ba4)</name>
    <dbReference type="NCBI Taxonomy" id="515621"/>
    <lineage>
        <taxon>Bacteria</taxon>
        <taxon>Bacillati</taxon>
        <taxon>Bacillota</taxon>
        <taxon>Clostridia</taxon>
        <taxon>Eubacteriales</taxon>
        <taxon>Clostridiaceae</taxon>
        <taxon>Clostridium</taxon>
    </lineage>
</organism>
<keyword id="KW-0227">DNA damage</keyword>
<keyword id="KW-0234">DNA repair</keyword>
<gene>
    <name evidence="1" type="primary">mutL</name>
    <name type="ordered locus">CLJ_B1977</name>
</gene>
<name>MUTL_CLOB6</name>
<evidence type="ECO:0000255" key="1">
    <source>
        <dbReference type="HAMAP-Rule" id="MF_00149"/>
    </source>
</evidence>
<dbReference type="EMBL" id="CP001083">
    <property type="protein sequence ID" value="ACQ55138.1"/>
    <property type="molecule type" value="Genomic_DNA"/>
</dbReference>
<dbReference type="RefSeq" id="WP_012721416.1">
    <property type="nucleotide sequence ID" value="NC_012658.1"/>
</dbReference>
<dbReference type="SMR" id="C3KX34"/>
<dbReference type="KEGG" id="cbi:CLJ_B1977"/>
<dbReference type="HOGENOM" id="CLU_004131_4_1_9"/>
<dbReference type="Proteomes" id="UP000002333">
    <property type="component" value="Chromosome"/>
</dbReference>
<dbReference type="GO" id="GO:0032300">
    <property type="term" value="C:mismatch repair complex"/>
    <property type="evidence" value="ECO:0007669"/>
    <property type="project" value="InterPro"/>
</dbReference>
<dbReference type="GO" id="GO:0005524">
    <property type="term" value="F:ATP binding"/>
    <property type="evidence" value="ECO:0007669"/>
    <property type="project" value="InterPro"/>
</dbReference>
<dbReference type="GO" id="GO:0016887">
    <property type="term" value="F:ATP hydrolysis activity"/>
    <property type="evidence" value="ECO:0007669"/>
    <property type="project" value="InterPro"/>
</dbReference>
<dbReference type="GO" id="GO:0140664">
    <property type="term" value="F:ATP-dependent DNA damage sensor activity"/>
    <property type="evidence" value="ECO:0007669"/>
    <property type="project" value="InterPro"/>
</dbReference>
<dbReference type="GO" id="GO:0030983">
    <property type="term" value="F:mismatched DNA binding"/>
    <property type="evidence" value="ECO:0007669"/>
    <property type="project" value="InterPro"/>
</dbReference>
<dbReference type="GO" id="GO:0006298">
    <property type="term" value="P:mismatch repair"/>
    <property type="evidence" value="ECO:0007669"/>
    <property type="project" value="UniProtKB-UniRule"/>
</dbReference>
<dbReference type="CDD" id="cd16926">
    <property type="entry name" value="HATPase_MutL-MLH-PMS-like"/>
    <property type="match status" value="1"/>
</dbReference>
<dbReference type="CDD" id="cd00782">
    <property type="entry name" value="MutL_Trans"/>
    <property type="match status" value="1"/>
</dbReference>
<dbReference type="FunFam" id="3.30.565.10:FF:000003">
    <property type="entry name" value="DNA mismatch repair endonuclease MutL"/>
    <property type="match status" value="1"/>
</dbReference>
<dbReference type="Gene3D" id="3.30.230.10">
    <property type="match status" value="1"/>
</dbReference>
<dbReference type="Gene3D" id="3.30.565.10">
    <property type="entry name" value="Histidine kinase-like ATPase, C-terminal domain"/>
    <property type="match status" value="1"/>
</dbReference>
<dbReference type="Gene3D" id="3.30.1540.20">
    <property type="entry name" value="MutL, C-terminal domain, dimerisation subdomain"/>
    <property type="match status" value="1"/>
</dbReference>
<dbReference type="Gene3D" id="3.30.1370.100">
    <property type="entry name" value="MutL, C-terminal domain, regulatory subdomain"/>
    <property type="match status" value="1"/>
</dbReference>
<dbReference type="HAMAP" id="MF_00149">
    <property type="entry name" value="DNA_mis_repair"/>
    <property type="match status" value="1"/>
</dbReference>
<dbReference type="InterPro" id="IPR014762">
    <property type="entry name" value="DNA_mismatch_repair_CS"/>
</dbReference>
<dbReference type="InterPro" id="IPR020667">
    <property type="entry name" value="DNA_mismatch_repair_MutL"/>
</dbReference>
<dbReference type="InterPro" id="IPR013507">
    <property type="entry name" value="DNA_mismatch_S5_2-like"/>
</dbReference>
<dbReference type="InterPro" id="IPR036890">
    <property type="entry name" value="HATPase_C_sf"/>
</dbReference>
<dbReference type="InterPro" id="IPR002099">
    <property type="entry name" value="MutL/Mlh/PMS"/>
</dbReference>
<dbReference type="InterPro" id="IPR038973">
    <property type="entry name" value="MutL/Mlh/Pms-like"/>
</dbReference>
<dbReference type="InterPro" id="IPR014790">
    <property type="entry name" value="MutL_C"/>
</dbReference>
<dbReference type="InterPro" id="IPR042120">
    <property type="entry name" value="MutL_C_dimsub"/>
</dbReference>
<dbReference type="InterPro" id="IPR042121">
    <property type="entry name" value="MutL_C_regsub"/>
</dbReference>
<dbReference type="InterPro" id="IPR037198">
    <property type="entry name" value="MutL_C_sf"/>
</dbReference>
<dbReference type="InterPro" id="IPR020568">
    <property type="entry name" value="Ribosomal_Su5_D2-typ_SF"/>
</dbReference>
<dbReference type="InterPro" id="IPR014721">
    <property type="entry name" value="Ribsml_uS5_D2-typ_fold_subgr"/>
</dbReference>
<dbReference type="NCBIfam" id="TIGR00585">
    <property type="entry name" value="mutl"/>
    <property type="match status" value="1"/>
</dbReference>
<dbReference type="PANTHER" id="PTHR10073">
    <property type="entry name" value="DNA MISMATCH REPAIR PROTEIN MLH, PMS, MUTL"/>
    <property type="match status" value="1"/>
</dbReference>
<dbReference type="PANTHER" id="PTHR10073:SF12">
    <property type="entry name" value="DNA MISMATCH REPAIR PROTEIN MLH1"/>
    <property type="match status" value="1"/>
</dbReference>
<dbReference type="Pfam" id="PF01119">
    <property type="entry name" value="DNA_mis_repair"/>
    <property type="match status" value="1"/>
</dbReference>
<dbReference type="Pfam" id="PF13589">
    <property type="entry name" value="HATPase_c_3"/>
    <property type="match status" value="1"/>
</dbReference>
<dbReference type="Pfam" id="PF08676">
    <property type="entry name" value="MutL_C"/>
    <property type="match status" value="1"/>
</dbReference>
<dbReference type="SMART" id="SM01340">
    <property type="entry name" value="DNA_mis_repair"/>
    <property type="match status" value="1"/>
</dbReference>
<dbReference type="SMART" id="SM00853">
    <property type="entry name" value="MutL_C"/>
    <property type="match status" value="1"/>
</dbReference>
<dbReference type="SUPFAM" id="SSF55874">
    <property type="entry name" value="ATPase domain of HSP90 chaperone/DNA topoisomerase II/histidine kinase"/>
    <property type="match status" value="1"/>
</dbReference>
<dbReference type="SUPFAM" id="SSF118116">
    <property type="entry name" value="DNA mismatch repair protein MutL"/>
    <property type="match status" value="1"/>
</dbReference>
<dbReference type="SUPFAM" id="SSF54211">
    <property type="entry name" value="Ribosomal protein S5 domain 2-like"/>
    <property type="match status" value="1"/>
</dbReference>
<dbReference type="PROSITE" id="PS00058">
    <property type="entry name" value="DNA_MISMATCH_REPAIR_1"/>
    <property type="match status" value="1"/>
</dbReference>
<protein>
    <recommendedName>
        <fullName evidence="1">DNA mismatch repair protein MutL</fullName>
    </recommendedName>
</protein>